<reference key="1">
    <citation type="journal article" date="2009" name="PLoS Genet.">
        <title>Organised genome dynamics in the Escherichia coli species results in highly diverse adaptive paths.</title>
        <authorList>
            <person name="Touchon M."/>
            <person name="Hoede C."/>
            <person name="Tenaillon O."/>
            <person name="Barbe V."/>
            <person name="Baeriswyl S."/>
            <person name="Bidet P."/>
            <person name="Bingen E."/>
            <person name="Bonacorsi S."/>
            <person name="Bouchier C."/>
            <person name="Bouvet O."/>
            <person name="Calteau A."/>
            <person name="Chiapello H."/>
            <person name="Clermont O."/>
            <person name="Cruveiller S."/>
            <person name="Danchin A."/>
            <person name="Diard M."/>
            <person name="Dossat C."/>
            <person name="Karoui M.E."/>
            <person name="Frapy E."/>
            <person name="Garry L."/>
            <person name="Ghigo J.M."/>
            <person name="Gilles A.M."/>
            <person name="Johnson J."/>
            <person name="Le Bouguenec C."/>
            <person name="Lescat M."/>
            <person name="Mangenot S."/>
            <person name="Martinez-Jehanne V."/>
            <person name="Matic I."/>
            <person name="Nassif X."/>
            <person name="Oztas S."/>
            <person name="Petit M.A."/>
            <person name="Pichon C."/>
            <person name="Rouy Z."/>
            <person name="Ruf C.S."/>
            <person name="Schneider D."/>
            <person name="Tourret J."/>
            <person name="Vacherie B."/>
            <person name="Vallenet D."/>
            <person name="Medigue C."/>
            <person name="Rocha E.P.C."/>
            <person name="Denamur E."/>
        </authorList>
    </citation>
    <scope>NUCLEOTIDE SEQUENCE [LARGE SCALE GENOMIC DNA]</scope>
    <source>
        <strain>S88 / ExPEC</strain>
    </source>
</reference>
<accession>B7MMY5</accession>
<gene>
    <name evidence="1" type="primary">uxaB</name>
    <name type="ordered locus">ECS88_1598</name>
</gene>
<sequence>MKTLNRRDFPGAQYPERIIQFGEGNFLRAFVDWQIDLLNEHTDLNSGVVVVRPIETSFPPSLSTQDGLYTTIIRGLNEKGEAVSDARLIRSVNREISVYSEYDEFLKLAHNPEMRFVFSNTTEAGISYHAGDKFDDAPAVSYPAKLTRLLFERFSHFNGALDKGWIIIPCELIDYNGDALRELVLRYAQEWALPEAFIQWLDQANSFCSTLVDRIVTGYPRDEVAKLEEELGYHDGFLDTAEHFYLFVIQGPKSLATELRLDKYPLNVLIVDDIKPYKERKVAILNGAHTALVPVAFQAGLDTVGEAMNDAEICAFVEKAIYEEIIPVLDLPRDELESFASAVTGRFRNPYIKHQLLSIALNGMTKFRTRILPQLLAGQKANGTLPARLTFALAALIAFYRGERNGETYPVQDDAHWLERYQQLWSQYRDRVIGTQELVAIVLAEKDHWEQDLTQVPGLVEQVANDLDAILEKGMREAVRPLC</sequence>
<organism>
    <name type="scientific">Escherichia coli O45:K1 (strain S88 / ExPEC)</name>
    <dbReference type="NCBI Taxonomy" id="585035"/>
    <lineage>
        <taxon>Bacteria</taxon>
        <taxon>Pseudomonadati</taxon>
        <taxon>Pseudomonadota</taxon>
        <taxon>Gammaproteobacteria</taxon>
        <taxon>Enterobacterales</taxon>
        <taxon>Enterobacteriaceae</taxon>
        <taxon>Escherichia</taxon>
    </lineage>
</organism>
<comment type="catalytic activity">
    <reaction evidence="1">
        <text>D-altronate + NAD(+) = keto-D-tagaturonate + NADH + H(+)</text>
        <dbReference type="Rhea" id="RHEA:17813"/>
        <dbReference type="ChEBI" id="CHEBI:15378"/>
        <dbReference type="ChEBI" id="CHEBI:17360"/>
        <dbReference type="ChEBI" id="CHEBI:17886"/>
        <dbReference type="ChEBI" id="CHEBI:57540"/>
        <dbReference type="ChEBI" id="CHEBI:57945"/>
        <dbReference type="EC" id="1.1.1.58"/>
    </reaction>
</comment>
<comment type="pathway">
    <text evidence="1">Carbohydrate metabolism; pentose and glucuronate interconversion.</text>
</comment>
<comment type="similarity">
    <text evidence="1">Belongs to the mannitol dehydrogenase family. UxaB subfamily.</text>
</comment>
<protein>
    <recommendedName>
        <fullName evidence="1">Altronate oxidoreductase</fullName>
        <ecNumber evidence="1">1.1.1.58</ecNumber>
    </recommendedName>
    <alternativeName>
        <fullName evidence="1">Tagaturonate dehydrogenase</fullName>
    </alternativeName>
    <alternativeName>
        <fullName evidence="1">Tagaturonate reductase</fullName>
    </alternativeName>
</protein>
<proteinExistence type="inferred from homology"/>
<keyword id="KW-0520">NAD</keyword>
<keyword id="KW-0560">Oxidoreductase</keyword>
<keyword id="KW-1185">Reference proteome</keyword>
<dbReference type="EC" id="1.1.1.58" evidence="1"/>
<dbReference type="EMBL" id="CU928161">
    <property type="protein sequence ID" value="CAR02913.1"/>
    <property type="molecule type" value="Genomic_DNA"/>
</dbReference>
<dbReference type="RefSeq" id="WP_000854637.1">
    <property type="nucleotide sequence ID" value="NC_011742.1"/>
</dbReference>
<dbReference type="SMR" id="B7MMY5"/>
<dbReference type="KEGG" id="ecz:ECS88_1598"/>
<dbReference type="HOGENOM" id="CLU_027324_1_0_6"/>
<dbReference type="UniPathway" id="UPA00246"/>
<dbReference type="Proteomes" id="UP000000747">
    <property type="component" value="Chromosome"/>
</dbReference>
<dbReference type="GO" id="GO:0005829">
    <property type="term" value="C:cytosol"/>
    <property type="evidence" value="ECO:0007669"/>
    <property type="project" value="TreeGrafter"/>
</dbReference>
<dbReference type="GO" id="GO:0008926">
    <property type="term" value="F:mannitol-1-phosphate 5-dehydrogenase activity"/>
    <property type="evidence" value="ECO:0007669"/>
    <property type="project" value="TreeGrafter"/>
</dbReference>
<dbReference type="GO" id="GO:0009026">
    <property type="term" value="F:tagaturonate reductase activity"/>
    <property type="evidence" value="ECO:0007669"/>
    <property type="project" value="UniProtKB-UniRule"/>
</dbReference>
<dbReference type="GO" id="GO:0019698">
    <property type="term" value="P:D-galacturonate catabolic process"/>
    <property type="evidence" value="ECO:0007669"/>
    <property type="project" value="TreeGrafter"/>
</dbReference>
<dbReference type="GO" id="GO:0019592">
    <property type="term" value="P:mannitol catabolic process"/>
    <property type="evidence" value="ECO:0007669"/>
    <property type="project" value="TreeGrafter"/>
</dbReference>
<dbReference type="FunFam" id="1.10.1040.10:FF:000018">
    <property type="entry name" value="Altronate oxidoreductase"/>
    <property type="match status" value="1"/>
</dbReference>
<dbReference type="FunFam" id="3.40.50.720:FF:000153">
    <property type="entry name" value="Altronate oxidoreductase"/>
    <property type="match status" value="1"/>
</dbReference>
<dbReference type="Gene3D" id="1.10.1040.10">
    <property type="entry name" value="N-(1-d-carboxylethyl)-l-norvaline Dehydrogenase, domain 2"/>
    <property type="match status" value="1"/>
</dbReference>
<dbReference type="Gene3D" id="3.40.50.720">
    <property type="entry name" value="NAD(P)-binding Rossmann-like Domain"/>
    <property type="match status" value="1"/>
</dbReference>
<dbReference type="HAMAP" id="MF_00670">
    <property type="entry name" value="Altron_oxidoreduct"/>
    <property type="match status" value="1"/>
</dbReference>
<dbReference type="InterPro" id="IPR008927">
    <property type="entry name" value="6-PGluconate_DH-like_C_sf"/>
</dbReference>
<dbReference type="InterPro" id="IPR013328">
    <property type="entry name" value="6PGD_dom2"/>
</dbReference>
<dbReference type="InterPro" id="IPR023668">
    <property type="entry name" value="Altronate_OxRdtase"/>
</dbReference>
<dbReference type="InterPro" id="IPR013118">
    <property type="entry name" value="Mannitol_DH_C"/>
</dbReference>
<dbReference type="InterPro" id="IPR013131">
    <property type="entry name" value="Mannitol_DH_N"/>
</dbReference>
<dbReference type="InterPro" id="IPR036291">
    <property type="entry name" value="NAD(P)-bd_dom_sf"/>
</dbReference>
<dbReference type="NCBIfam" id="NF002969">
    <property type="entry name" value="PRK03643.1"/>
    <property type="match status" value="1"/>
</dbReference>
<dbReference type="PANTHER" id="PTHR30524:SF0">
    <property type="entry name" value="ALTRONATE OXIDOREDUCTASE-RELATED"/>
    <property type="match status" value="1"/>
</dbReference>
<dbReference type="PANTHER" id="PTHR30524">
    <property type="entry name" value="MANNITOL-1-PHOSPHATE 5-DEHYDROGENASE"/>
    <property type="match status" value="1"/>
</dbReference>
<dbReference type="Pfam" id="PF01232">
    <property type="entry name" value="Mannitol_dh"/>
    <property type="match status" value="1"/>
</dbReference>
<dbReference type="Pfam" id="PF08125">
    <property type="entry name" value="Mannitol_dh_C"/>
    <property type="match status" value="1"/>
</dbReference>
<dbReference type="SUPFAM" id="SSF48179">
    <property type="entry name" value="6-phosphogluconate dehydrogenase C-terminal domain-like"/>
    <property type="match status" value="1"/>
</dbReference>
<dbReference type="SUPFAM" id="SSF51735">
    <property type="entry name" value="NAD(P)-binding Rossmann-fold domains"/>
    <property type="match status" value="1"/>
</dbReference>
<evidence type="ECO:0000255" key="1">
    <source>
        <dbReference type="HAMAP-Rule" id="MF_00670"/>
    </source>
</evidence>
<name>UXAB_ECO45</name>
<feature type="chain" id="PRO_1000131506" description="Altronate oxidoreductase">
    <location>
        <begin position="1"/>
        <end position="483"/>
    </location>
</feature>
<feature type="binding site" evidence="1">
    <location>
        <begin position="18"/>
        <end position="29"/>
    </location>
    <ligand>
        <name>NAD(+)</name>
        <dbReference type="ChEBI" id="CHEBI:57540"/>
    </ligand>
</feature>